<evidence type="ECO:0000255" key="1">
    <source>
        <dbReference type="HAMAP-Rule" id="MF_00685"/>
    </source>
</evidence>
<protein>
    <recommendedName>
        <fullName evidence="1">1,4-alpha-glucan branching enzyme GlgB</fullName>
        <ecNumber evidence="1">2.4.1.18</ecNumber>
    </recommendedName>
    <alternativeName>
        <fullName evidence="1">1,4-alpha-D-glucan:1,4-alpha-D-glucan 6-glucosyl-transferase</fullName>
    </alternativeName>
    <alternativeName>
        <fullName evidence="1">Alpha-(1-&gt;4)-glucan branching enzyme</fullName>
    </alternativeName>
    <alternativeName>
        <fullName evidence="1">Glycogen branching enzyme</fullName>
        <shortName evidence="1">BE</shortName>
    </alternativeName>
</protein>
<proteinExistence type="inferred from homology"/>
<name>GLGB_SHIFL</name>
<accession>Q83PV3</accession>
<organism>
    <name type="scientific">Shigella flexneri</name>
    <dbReference type="NCBI Taxonomy" id="623"/>
    <lineage>
        <taxon>Bacteria</taxon>
        <taxon>Pseudomonadati</taxon>
        <taxon>Pseudomonadota</taxon>
        <taxon>Gammaproteobacteria</taxon>
        <taxon>Enterobacterales</taxon>
        <taxon>Enterobacteriaceae</taxon>
        <taxon>Shigella</taxon>
    </lineage>
</organism>
<sequence length="728" mass="84351">MSDRIDRDVINALIAGHFADPFSVLGMHKTTAGLEVRALLPDATDVWVIEPKTGRKLAKLECLDSRGFFSGVIPRRKNFFRYQLAVVWHGQQNLIDDPYRFGPLIQEMDAWLLSEGTHLRPYETLGAHADTMDGVTGTRFSVWAPNARRVSVVGQFNYWDGRRHPMRLRKESGIWELFIPGAHNGQLYKYEMIDANGNLRLKSDPYAFEAQMRPETASLICGLPEKVVQTEERKKANQFDAPISIYEVHLGSWRRHTDNNFWLSYRELADQLVPYAKWMGFTHLELLPINEHPFDGSWGYQPTGLYAPTRRFGTRDDFRYFIDAAHAAGLNVILDWVPGHFPTDDFALAEFDGTNLYEHSDPREGYHQDWNTLIYNYGRREVSNFLVGNALYWIERFGIDALRVDAVASMIYRDYSRKEGEWIPNEFGGRENLEAIEFLRNTNRILGEQVSGAVTMAEESTDFPGVSRPQDMGGLGFWYKWNLGWMHDTLDYMKLDPIYRQYHHDKLTFGMLYNYTENFVLPLSHDEVVHGKKSILDRMPGDAWQKFANLRAYYGWMWAFPGKKLLFMGNEFAQGREWNHDASLDWHLLEGGDNWHHGVQRLVRDLNLTYRHHKAMHELDFDPYGFEWLVVDDKERSVLIFVRRDKEGNEIIVASNFTPVPRHDYRFGINQPGKWREILNTDSIHYHGSNAGNGGTVHSDEIASHGRQHSLSLTLPPLATIWLVREAE</sequence>
<gene>
    <name evidence="1" type="primary">glgB</name>
    <name type="ordered locus">SF3455</name>
    <name type="ordered locus">S4308</name>
</gene>
<comment type="function">
    <text evidence="1">Catalyzes the formation of the alpha-1,6-glucosidic linkages in glycogen by scission of a 1,4-alpha-linked oligosaccharide from growing alpha-1,4-glucan chains and the subsequent attachment of the oligosaccharide to the alpha-1,6 position.</text>
</comment>
<comment type="catalytic activity">
    <reaction evidence="1">
        <text>Transfers a segment of a (1-&gt;4)-alpha-D-glucan chain to a primary hydroxy group in a similar glucan chain.</text>
        <dbReference type="EC" id="2.4.1.18"/>
    </reaction>
</comment>
<comment type="pathway">
    <text evidence="1">Glycan biosynthesis; glycogen biosynthesis.</text>
</comment>
<comment type="subunit">
    <text evidence="1">Monomer.</text>
</comment>
<comment type="similarity">
    <text evidence="1">Belongs to the glycosyl hydrolase 13 family. GlgB subfamily.</text>
</comment>
<feature type="chain" id="PRO_0000188743" description="1,4-alpha-glucan branching enzyme GlgB">
    <location>
        <begin position="1"/>
        <end position="728"/>
    </location>
</feature>
<feature type="active site" description="Nucleophile" evidence="1">
    <location>
        <position position="405"/>
    </location>
</feature>
<feature type="active site" description="Proton donor" evidence="1">
    <location>
        <position position="458"/>
    </location>
</feature>
<reference key="1">
    <citation type="journal article" date="2002" name="Nucleic Acids Res.">
        <title>Genome sequence of Shigella flexneri 2a: insights into pathogenicity through comparison with genomes of Escherichia coli K12 and O157.</title>
        <authorList>
            <person name="Jin Q."/>
            <person name="Yuan Z."/>
            <person name="Xu J."/>
            <person name="Wang Y."/>
            <person name="Shen Y."/>
            <person name="Lu W."/>
            <person name="Wang J."/>
            <person name="Liu H."/>
            <person name="Yang J."/>
            <person name="Yang F."/>
            <person name="Zhang X."/>
            <person name="Zhang J."/>
            <person name="Yang G."/>
            <person name="Wu H."/>
            <person name="Qu D."/>
            <person name="Dong J."/>
            <person name="Sun L."/>
            <person name="Xue Y."/>
            <person name="Zhao A."/>
            <person name="Gao Y."/>
            <person name="Zhu J."/>
            <person name="Kan B."/>
            <person name="Ding K."/>
            <person name="Chen S."/>
            <person name="Cheng H."/>
            <person name="Yao Z."/>
            <person name="He B."/>
            <person name="Chen R."/>
            <person name="Ma D."/>
            <person name="Qiang B."/>
            <person name="Wen Y."/>
            <person name="Hou Y."/>
            <person name="Yu J."/>
        </authorList>
    </citation>
    <scope>NUCLEOTIDE SEQUENCE [LARGE SCALE GENOMIC DNA]</scope>
    <source>
        <strain>301 / Serotype 2a</strain>
    </source>
</reference>
<reference key="2">
    <citation type="journal article" date="2003" name="Infect. Immun.">
        <title>Complete genome sequence and comparative genomics of Shigella flexneri serotype 2a strain 2457T.</title>
        <authorList>
            <person name="Wei J."/>
            <person name="Goldberg M.B."/>
            <person name="Burland V."/>
            <person name="Venkatesan M.M."/>
            <person name="Deng W."/>
            <person name="Fournier G."/>
            <person name="Mayhew G.F."/>
            <person name="Plunkett G. III"/>
            <person name="Rose D.J."/>
            <person name="Darling A."/>
            <person name="Mau B."/>
            <person name="Perna N.T."/>
            <person name="Payne S.M."/>
            <person name="Runyen-Janecky L.J."/>
            <person name="Zhou S."/>
            <person name="Schwartz D.C."/>
            <person name="Blattner F.R."/>
        </authorList>
    </citation>
    <scope>NUCLEOTIDE SEQUENCE [LARGE SCALE GENOMIC DNA]</scope>
    <source>
        <strain>ATCC 700930 / 2457T / Serotype 2a</strain>
    </source>
</reference>
<dbReference type="EC" id="2.4.1.18" evidence="1"/>
<dbReference type="EMBL" id="AE005674">
    <property type="protein sequence ID" value="AAN44915.1"/>
    <property type="molecule type" value="Genomic_DNA"/>
</dbReference>
<dbReference type="EMBL" id="AE014073">
    <property type="protein sequence ID" value="AAP19266.1"/>
    <property type="molecule type" value="Genomic_DNA"/>
</dbReference>
<dbReference type="RefSeq" id="NP_709208.1">
    <property type="nucleotide sequence ID" value="NC_004337.2"/>
</dbReference>
<dbReference type="RefSeq" id="WP_001283716.1">
    <property type="nucleotide sequence ID" value="NZ_WPGW01000010.1"/>
</dbReference>
<dbReference type="SMR" id="Q83PV3"/>
<dbReference type="STRING" id="198214.SF3455"/>
<dbReference type="PaxDb" id="198214-SF3455"/>
<dbReference type="GeneID" id="1026458"/>
<dbReference type="KEGG" id="sfl:SF3455"/>
<dbReference type="KEGG" id="sfx:S4308"/>
<dbReference type="PATRIC" id="fig|198214.7.peg.4075"/>
<dbReference type="HOGENOM" id="CLU_004245_3_2_6"/>
<dbReference type="UniPathway" id="UPA00164"/>
<dbReference type="Proteomes" id="UP000001006">
    <property type="component" value="Chromosome"/>
</dbReference>
<dbReference type="Proteomes" id="UP000002673">
    <property type="component" value="Chromosome"/>
</dbReference>
<dbReference type="GO" id="GO:0005829">
    <property type="term" value="C:cytosol"/>
    <property type="evidence" value="ECO:0007669"/>
    <property type="project" value="TreeGrafter"/>
</dbReference>
<dbReference type="GO" id="GO:0003844">
    <property type="term" value="F:1,4-alpha-glucan branching enzyme activity"/>
    <property type="evidence" value="ECO:0007669"/>
    <property type="project" value="UniProtKB-UniRule"/>
</dbReference>
<dbReference type="GO" id="GO:0043169">
    <property type="term" value="F:cation binding"/>
    <property type="evidence" value="ECO:0007669"/>
    <property type="project" value="InterPro"/>
</dbReference>
<dbReference type="GO" id="GO:0004553">
    <property type="term" value="F:hydrolase activity, hydrolyzing O-glycosyl compounds"/>
    <property type="evidence" value="ECO:0007669"/>
    <property type="project" value="InterPro"/>
</dbReference>
<dbReference type="GO" id="GO:0005978">
    <property type="term" value="P:glycogen biosynthetic process"/>
    <property type="evidence" value="ECO:0007669"/>
    <property type="project" value="UniProtKB-UniRule"/>
</dbReference>
<dbReference type="CDD" id="cd11322">
    <property type="entry name" value="AmyAc_Glg_BE"/>
    <property type="match status" value="1"/>
</dbReference>
<dbReference type="CDD" id="cd02855">
    <property type="entry name" value="E_set_GBE_prok_N"/>
    <property type="match status" value="1"/>
</dbReference>
<dbReference type="FunFam" id="2.60.40.10:FF:000169">
    <property type="entry name" value="1,4-alpha-glucan branching enzyme GlgB"/>
    <property type="match status" value="1"/>
</dbReference>
<dbReference type="FunFam" id="2.60.40.10:FF:000331">
    <property type="entry name" value="1,4-alpha-glucan branching enzyme GlgB"/>
    <property type="match status" value="1"/>
</dbReference>
<dbReference type="FunFam" id="2.60.40.1180:FF:000002">
    <property type="entry name" value="1,4-alpha-glucan branching enzyme GlgB"/>
    <property type="match status" value="1"/>
</dbReference>
<dbReference type="FunFam" id="3.20.20.80:FF:000003">
    <property type="entry name" value="1,4-alpha-glucan branching enzyme GlgB"/>
    <property type="match status" value="1"/>
</dbReference>
<dbReference type="Gene3D" id="3.20.20.80">
    <property type="entry name" value="Glycosidases"/>
    <property type="match status" value="1"/>
</dbReference>
<dbReference type="Gene3D" id="2.60.40.1180">
    <property type="entry name" value="Golgi alpha-mannosidase II"/>
    <property type="match status" value="1"/>
</dbReference>
<dbReference type="Gene3D" id="2.60.40.10">
    <property type="entry name" value="Immunoglobulins"/>
    <property type="match status" value="2"/>
</dbReference>
<dbReference type="HAMAP" id="MF_00685">
    <property type="entry name" value="GlgB"/>
    <property type="match status" value="1"/>
</dbReference>
<dbReference type="InterPro" id="IPR006048">
    <property type="entry name" value="A-amylase/branching_C"/>
</dbReference>
<dbReference type="InterPro" id="IPR037439">
    <property type="entry name" value="Branching_enzy"/>
</dbReference>
<dbReference type="InterPro" id="IPR006407">
    <property type="entry name" value="GlgB"/>
</dbReference>
<dbReference type="InterPro" id="IPR054169">
    <property type="entry name" value="GlgB_N"/>
</dbReference>
<dbReference type="InterPro" id="IPR044143">
    <property type="entry name" value="GlgB_N_E_set_prok"/>
</dbReference>
<dbReference type="InterPro" id="IPR006047">
    <property type="entry name" value="Glyco_hydro_13_cat_dom"/>
</dbReference>
<dbReference type="InterPro" id="IPR004193">
    <property type="entry name" value="Glyco_hydro_13_N"/>
</dbReference>
<dbReference type="InterPro" id="IPR013780">
    <property type="entry name" value="Glyco_hydro_b"/>
</dbReference>
<dbReference type="InterPro" id="IPR017853">
    <property type="entry name" value="Glycoside_hydrolase_SF"/>
</dbReference>
<dbReference type="InterPro" id="IPR013783">
    <property type="entry name" value="Ig-like_fold"/>
</dbReference>
<dbReference type="InterPro" id="IPR014756">
    <property type="entry name" value="Ig_E-set"/>
</dbReference>
<dbReference type="NCBIfam" id="TIGR01515">
    <property type="entry name" value="branching_enzym"/>
    <property type="match status" value="1"/>
</dbReference>
<dbReference type="NCBIfam" id="NF003811">
    <property type="entry name" value="PRK05402.1"/>
    <property type="match status" value="1"/>
</dbReference>
<dbReference type="NCBIfam" id="NF008967">
    <property type="entry name" value="PRK12313.1"/>
    <property type="match status" value="1"/>
</dbReference>
<dbReference type="PANTHER" id="PTHR43651">
    <property type="entry name" value="1,4-ALPHA-GLUCAN-BRANCHING ENZYME"/>
    <property type="match status" value="1"/>
</dbReference>
<dbReference type="PANTHER" id="PTHR43651:SF3">
    <property type="entry name" value="1,4-ALPHA-GLUCAN-BRANCHING ENZYME"/>
    <property type="match status" value="1"/>
</dbReference>
<dbReference type="Pfam" id="PF00128">
    <property type="entry name" value="Alpha-amylase"/>
    <property type="match status" value="1"/>
</dbReference>
<dbReference type="Pfam" id="PF02806">
    <property type="entry name" value="Alpha-amylase_C"/>
    <property type="match status" value="1"/>
</dbReference>
<dbReference type="Pfam" id="PF02922">
    <property type="entry name" value="CBM_48"/>
    <property type="match status" value="1"/>
</dbReference>
<dbReference type="Pfam" id="PF22019">
    <property type="entry name" value="GlgB_N"/>
    <property type="match status" value="1"/>
</dbReference>
<dbReference type="PIRSF" id="PIRSF000463">
    <property type="entry name" value="GlgB"/>
    <property type="match status" value="1"/>
</dbReference>
<dbReference type="SMART" id="SM00642">
    <property type="entry name" value="Aamy"/>
    <property type="match status" value="1"/>
</dbReference>
<dbReference type="SUPFAM" id="SSF51445">
    <property type="entry name" value="(Trans)glycosidases"/>
    <property type="match status" value="1"/>
</dbReference>
<dbReference type="SUPFAM" id="SSF81296">
    <property type="entry name" value="E set domains"/>
    <property type="match status" value="2"/>
</dbReference>
<dbReference type="SUPFAM" id="SSF51011">
    <property type="entry name" value="Glycosyl hydrolase domain"/>
    <property type="match status" value="1"/>
</dbReference>
<keyword id="KW-0119">Carbohydrate metabolism</keyword>
<keyword id="KW-0320">Glycogen biosynthesis</keyword>
<keyword id="KW-0321">Glycogen metabolism</keyword>
<keyword id="KW-0328">Glycosyltransferase</keyword>
<keyword id="KW-1185">Reference proteome</keyword>
<keyword id="KW-0808">Transferase</keyword>